<organism>
    <name type="scientific">Mus musculus</name>
    <name type="common">Mouse</name>
    <dbReference type="NCBI Taxonomy" id="10090"/>
    <lineage>
        <taxon>Eukaryota</taxon>
        <taxon>Metazoa</taxon>
        <taxon>Chordata</taxon>
        <taxon>Craniata</taxon>
        <taxon>Vertebrata</taxon>
        <taxon>Euteleostomi</taxon>
        <taxon>Mammalia</taxon>
        <taxon>Eutheria</taxon>
        <taxon>Euarchontoglires</taxon>
        <taxon>Glires</taxon>
        <taxon>Rodentia</taxon>
        <taxon>Myomorpha</taxon>
        <taxon>Muroidea</taxon>
        <taxon>Muridae</taxon>
        <taxon>Murinae</taxon>
        <taxon>Mus</taxon>
        <taxon>Mus</taxon>
    </lineage>
</organism>
<evidence type="ECO:0000250" key="1"/>
<evidence type="ECO:0000255" key="2"/>
<evidence type="ECO:0000255" key="3">
    <source>
        <dbReference type="PROSITE-ProRule" id="PRU00521"/>
    </source>
</evidence>
<evidence type="ECO:0000269" key="4">
    <source>
    </source>
</evidence>
<evidence type="ECO:0000305" key="5"/>
<keyword id="KW-1003">Cell membrane</keyword>
<keyword id="KW-1015">Disulfide bond</keyword>
<keyword id="KW-0297">G-protein coupled receptor</keyword>
<keyword id="KW-0325">Glycoprotein</keyword>
<keyword id="KW-0472">Membrane</keyword>
<keyword id="KW-0597">Phosphoprotein</keyword>
<keyword id="KW-0675">Receptor</keyword>
<keyword id="KW-1185">Reference proteome</keyword>
<keyword id="KW-0807">Transducer</keyword>
<keyword id="KW-0812">Transmembrane</keyword>
<keyword id="KW-1133">Transmembrane helix</keyword>
<reference key="1">
    <citation type="journal article" date="1996" name="Biochem. Biophys. Res. Commun.">
        <title>Molecular cloning of murine CC CKR-4 and high affinity binding of chemokines to murine and human CC CKR-4.</title>
        <authorList>
            <person name="Hoogewerf A.J."/>
            <person name="Black D."/>
            <person name="Proudfoot A.E.I."/>
            <person name="Wells T.N.C."/>
            <person name="Power C.A."/>
        </authorList>
    </citation>
    <scope>NUCLEOTIDE SEQUENCE [MRNA]</scope>
    <source>
        <strain>C57BL/6 X CBA</strain>
        <tissue>Thymus</tissue>
    </source>
</reference>
<reference key="2">
    <citation type="journal article" date="1997" name="Blood">
        <title>Molecular cloning and characterization of a cDNA, CHEMR1, encoding a chemokine receptor with a homology to the human C-C chemokine receptor, CCR-4.</title>
        <authorList>
            <person name="Youn B.-S."/>
            <person name="Kim S.-H."/>
            <person name="Lyu M.S."/>
            <person name="Kozak C.A."/>
            <person name="Taub D.D."/>
            <person name="Kwon B.S."/>
        </authorList>
    </citation>
    <scope>NUCLEOTIDE SEQUENCE [MRNA]</scope>
    <source>
        <strain>C57BL/6J</strain>
        <tissue>Cytotoxic T-cell</tissue>
    </source>
</reference>
<reference key="3">
    <citation type="submission" date="2005-09" db="EMBL/GenBank/DDBJ databases">
        <authorList>
            <person name="Mural R.J."/>
            <person name="Adams M.D."/>
            <person name="Myers E.W."/>
            <person name="Smith H.O."/>
            <person name="Venter J.C."/>
        </authorList>
    </citation>
    <scope>NUCLEOTIDE SEQUENCE [LARGE SCALE GENOMIC DNA]</scope>
</reference>
<reference key="4">
    <citation type="journal article" date="2004" name="Genome Res.">
        <title>The status, quality, and expansion of the NIH full-length cDNA project: the Mammalian Gene Collection (MGC).</title>
        <authorList>
            <consortium name="The MGC Project Team"/>
        </authorList>
    </citation>
    <scope>NUCLEOTIDE SEQUENCE [LARGE SCALE MRNA]</scope>
    <source>
        <tissue>Thymus</tissue>
    </source>
</reference>
<reference key="5">
    <citation type="journal article" date="2000" name="J. Exp. Med.">
        <title>A key role for CC chemokine receptor 4 in lipopolysaccharide-induced endotoxic shock.</title>
        <authorList>
            <person name="Buser R."/>
            <person name="Conquet F."/>
            <person name="Proudfoot A.E.I."/>
            <person name="Wells T.N.C."/>
            <person name="Power C.A."/>
        </authorList>
    </citation>
    <scope>FUNCTION</scope>
</reference>
<name>CCR4_MOUSE</name>
<accession>P51680</accession>
<accession>Q14A03</accession>
<proteinExistence type="evidence at transcript level"/>
<protein>
    <recommendedName>
        <fullName>C-C chemokine receptor type 4</fullName>
        <shortName>C-C CKR-4</shortName>
        <shortName>CC-CKR-4</shortName>
        <shortName>CCR-4</shortName>
        <shortName>CCR4</shortName>
    </recommendedName>
    <cdAntigenName>CD194</cdAntigenName>
</protein>
<feature type="chain" id="PRO_0000069246" description="C-C chemokine receptor type 4">
    <location>
        <begin position="1"/>
        <end position="360"/>
    </location>
</feature>
<feature type="topological domain" description="Extracellular" evidence="2">
    <location>
        <begin position="1"/>
        <end position="39"/>
    </location>
</feature>
<feature type="transmembrane region" description="Helical; Name=1" evidence="2">
    <location>
        <begin position="40"/>
        <end position="67"/>
    </location>
</feature>
<feature type="topological domain" description="Cytoplasmic" evidence="2">
    <location>
        <begin position="68"/>
        <end position="77"/>
    </location>
</feature>
<feature type="transmembrane region" description="Helical; Name=2" evidence="2">
    <location>
        <begin position="78"/>
        <end position="98"/>
    </location>
</feature>
<feature type="topological domain" description="Extracellular" evidence="2">
    <location>
        <begin position="99"/>
        <end position="111"/>
    </location>
</feature>
<feature type="transmembrane region" description="Helical; Name=3" evidence="2">
    <location>
        <begin position="112"/>
        <end position="133"/>
    </location>
</feature>
<feature type="topological domain" description="Cytoplasmic" evidence="2">
    <location>
        <begin position="134"/>
        <end position="150"/>
    </location>
</feature>
<feature type="transmembrane region" description="Helical; Name=4" evidence="2">
    <location>
        <begin position="151"/>
        <end position="175"/>
    </location>
</feature>
<feature type="topological domain" description="Extracellular" evidence="2">
    <location>
        <begin position="176"/>
        <end position="206"/>
    </location>
</feature>
<feature type="transmembrane region" description="Helical; Name=5" evidence="2">
    <location>
        <begin position="207"/>
        <end position="226"/>
    </location>
</feature>
<feature type="topological domain" description="Cytoplasmic" evidence="2">
    <location>
        <begin position="227"/>
        <end position="242"/>
    </location>
</feature>
<feature type="transmembrane region" description="Helical; Name=6" evidence="2">
    <location>
        <begin position="243"/>
        <end position="267"/>
    </location>
</feature>
<feature type="topological domain" description="Extracellular" evidence="2">
    <location>
        <begin position="268"/>
        <end position="284"/>
    </location>
</feature>
<feature type="transmembrane region" description="Helical; Name=7" evidence="2">
    <location>
        <begin position="285"/>
        <end position="308"/>
    </location>
</feature>
<feature type="topological domain" description="Cytoplasmic" evidence="2">
    <location>
        <begin position="309"/>
        <end position="360"/>
    </location>
</feature>
<feature type="glycosylation site" description="N-linked (GlcNAc...) asparagine" evidence="2">
    <location>
        <position position="2"/>
    </location>
</feature>
<feature type="glycosylation site" description="N-linked (GlcNAc...) asparagine" evidence="2">
    <location>
        <position position="183"/>
    </location>
</feature>
<feature type="glycosylation site" description="N-linked (GlcNAc...) asparagine" evidence="2">
    <location>
        <position position="194"/>
    </location>
</feature>
<feature type="disulfide bond" evidence="3">
    <location>
        <begin position="110"/>
        <end position="187"/>
    </location>
</feature>
<feature type="sequence conflict" description="In Ref. 2; AAA92582." evidence="5" ref="2">
    <original>T</original>
    <variation>I</variation>
    <location>
        <position position="4"/>
    </location>
</feature>
<feature type="sequence conflict" description="In Ref. 2; AAA92582." evidence="5" ref="2">
    <original>S</original>
    <variation>T</variation>
    <location>
        <position position="145"/>
    </location>
</feature>
<feature type="sequence conflict" description="In Ref. 2; AAA92582." evidence="5" ref="2">
    <original>E</original>
    <variation>Q</variation>
    <location>
        <position position="181"/>
    </location>
</feature>
<feature type="sequence conflict" description="In Ref. 2; AAA92582." evidence="5" ref="2">
    <original>E</original>
    <variation>D</variation>
    <location>
        <position position="205"/>
    </location>
</feature>
<feature type="sequence conflict" description="In Ref. 1; CAA62372." evidence="5" ref="1">
    <original>C</original>
    <variation>W</variation>
    <location>
        <position position="221"/>
    </location>
</feature>
<feature type="sequence conflict" description="In Ref. 2; AAA92582." evidence="5" ref="2">
    <original>V</original>
    <variation>L</variation>
    <location>
        <position position="241"/>
    </location>
</feature>
<feature type="sequence conflict" description="In Ref. 1; CAA62372." evidence="5" ref="1">
    <original>A</original>
    <variation>G</variation>
    <location>
        <position position="246"/>
    </location>
</feature>
<feature type="sequence conflict" description="In Ref. 1; CAA62372." evidence="5" ref="1">
    <original>A</original>
    <variation>G</variation>
    <location>
        <position position="293"/>
    </location>
</feature>
<feature type="sequence conflict" description="In Ref. 2; AAA92582." evidence="5" ref="2">
    <original>F</original>
    <variation>S</variation>
    <location>
        <position position="311"/>
    </location>
</feature>
<sequence>MNATEVTDTTQDETVYNSYYFYESMPKPCTKEGIKAFGEVFLPPLYSLVFLLGLFGNSVVVLVLFKYKRLKSMTDVYLLNLAISDLLFVLSLPFWGYYAADQWVFGLGLCKIVSWMYLVGFYSGIFFIMLMSIDRYLAIVHAVFSLKARTLTYGVITSLITWSVAVFASLPGLLFSTCYTEHNHTYCKTQYSVNSTTWKVLSSLEINVLGLLIPLGIMLFCYSMIIRTLQHCKNEKKNRAVRMIFAVVVLFLGFWTPYNVVLFLETLVELEVLQDCTLERYLDYAIQATETLAFIHCCLNPVIYFFLGEKFRKYITQLFRTCRGPLVLCKHCDFLQVYSADMSSSSYTQSTVDHDFRDAL</sequence>
<gene>
    <name type="primary">Ccr4</name>
    <name type="synonym">Cmkbr4</name>
</gene>
<comment type="function">
    <text evidence="4">High affinity receptor for the C-C type chemokines CCL17/TARC and CCL22/MDC. The activity of this receptor is mediated by G(i) proteins which activate a phosphatidylinositol-calcium second messenger system. Could play a role in lipopolysaccharide (LPS)-induced endotoxic shock. In the CNS, could mediate hippocampal-neuron survival.</text>
</comment>
<comment type="subcellular location">
    <subcellularLocation>
        <location>Cell membrane</location>
        <topology>Multi-pass membrane protein</topology>
    </subcellularLocation>
</comment>
<comment type="tissue specificity">
    <text>Expressed in the thymus, macrophages and T- and B-cells.</text>
</comment>
<comment type="developmental stage">
    <text>Low expression at 7.5 dpc and 12.5 dpc in the yolk sac.</text>
</comment>
<comment type="PTM">
    <text evidence="1">In natural killer cells, CCL22 binding induces phosphorylation on yet undefined Ser/Thr residues, most probably by beta-adrenergic receptor kinases 1 and 2.</text>
</comment>
<comment type="similarity">
    <text evidence="3">Belongs to the G-protein coupled receptor 1 family.</text>
</comment>
<dbReference type="EMBL" id="X90862">
    <property type="protein sequence ID" value="CAA62372.1"/>
    <property type="molecule type" value="mRNA"/>
</dbReference>
<dbReference type="EMBL" id="U15208">
    <property type="protein sequence ID" value="AAA92582.1"/>
    <property type="molecule type" value="mRNA"/>
</dbReference>
<dbReference type="EMBL" id="CH466587">
    <property type="protein sequence ID" value="EDL09307.1"/>
    <property type="molecule type" value="Genomic_DNA"/>
</dbReference>
<dbReference type="EMBL" id="CH466587">
    <property type="protein sequence ID" value="EDL09308.1"/>
    <property type="molecule type" value="Genomic_DNA"/>
</dbReference>
<dbReference type="EMBL" id="BC117041">
    <property type="protein sequence ID" value="AAI17042.1"/>
    <property type="molecule type" value="mRNA"/>
</dbReference>
<dbReference type="EMBL" id="BC119171">
    <property type="protein sequence ID" value="AAI19172.1"/>
    <property type="molecule type" value="mRNA"/>
</dbReference>
<dbReference type="CCDS" id="CCDS23594.1"/>
<dbReference type="PIR" id="JC4587">
    <property type="entry name" value="JC4587"/>
</dbReference>
<dbReference type="RefSeq" id="NP_034046.2">
    <property type="nucleotide sequence ID" value="NM_009916.2"/>
</dbReference>
<dbReference type="RefSeq" id="XP_006511996.1">
    <property type="nucleotide sequence ID" value="XM_006511933.2"/>
</dbReference>
<dbReference type="RefSeq" id="XP_006511997.1">
    <property type="nucleotide sequence ID" value="XM_006511934.4"/>
</dbReference>
<dbReference type="RefSeq" id="XP_011241235.1">
    <property type="nucleotide sequence ID" value="XM_011242933.3"/>
</dbReference>
<dbReference type="SMR" id="P51680"/>
<dbReference type="CORUM" id="P51680"/>
<dbReference type="FunCoup" id="P51680">
    <property type="interactions" value="392"/>
</dbReference>
<dbReference type="IntAct" id="P51680">
    <property type="interactions" value="3"/>
</dbReference>
<dbReference type="STRING" id="10090.ENSMUSP00000062677"/>
<dbReference type="BindingDB" id="P51680"/>
<dbReference type="ChEMBL" id="CHEMBL5410"/>
<dbReference type="GuidetoPHARMACOLOGY" id="61"/>
<dbReference type="GlyCosmos" id="P51680">
    <property type="glycosylation" value="3 sites, No reported glycans"/>
</dbReference>
<dbReference type="GlyGen" id="P51680">
    <property type="glycosylation" value="3 sites"/>
</dbReference>
<dbReference type="PhosphoSitePlus" id="P51680"/>
<dbReference type="PaxDb" id="10090-ENSMUSP00000062677"/>
<dbReference type="ProteomicsDB" id="281345"/>
<dbReference type="Antibodypedia" id="11668">
    <property type="antibodies" value="793 antibodies from 40 providers"/>
</dbReference>
<dbReference type="DNASU" id="12773"/>
<dbReference type="Ensembl" id="ENSMUST00000054414.5">
    <property type="protein sequence ID" value="ENSMUSP00000062677.4"/>
    <property type="gene ID" value="ENSMUSG00000047898.8"/>
</dbReference>
<dbReference type="Ensembl" id="ENSMUST00000215425.2">
    <property type="protein sequence ID" value="ENSMUSP00000150002.2"/>
    <property type="gene ID" value="ENSMUSG00000047898.8"/>
</dbReference>
<dbReference type="GeneID" id="12773"/>
<dbReference type="KEGG" id="mmu:12773"/>
<dbReference type="UCSC" id="uc009rxo.2">
    <property type="organism name" value="mouse"/>
</dbReference>
<dbReference type="AGR" id="MGI:107824"/>
<dbReference type="CTD" id="1233"/>
<dbReference type="MGI" id="MGI:107824">
    <property type="gene designation" value="Ccr4"/>
</dbReference>
<dbReference type="VEuPathDB" id="HostDB:ENSMUSG00000047898"/>
<dbReference type="eggNOG" id="KOG3656">
    <property type="taxonomic scope" value="Eukaryota"/>
</dbReference>
<dbReference type="GeneTree" id="ENSGT01020000230359"/>
<dbReference type="HOGENOM" id="CLU_009579_8_3_1"/>
<dbReference type="InParanoid" id="P51680"/>
<dbReference type="OMA" id="CKIISWM"/>
<dbReference type="OrthoDB" id="5981253at2759"/>
<dbReference type="PhylomeDB" id="P51680"/>
<dbReference type="TreeFam" id="TF330966"/>
<dbReference type="Reactome" id="R-MMU-380108">
    <property type="pathway name" value="Chemokine receptors bind chemokines"/>
</dbReference>
<dbReference type="Reactome" id="R-MMU-418594">
    <property type="pathway name" value="G alpha (i) signalling events"/>
</dbReference>
<dbReference type="BioGRID-ORCS" id="12773">
    <property type="hits" value="4 hits in 79 CRISPR screens"/>
</dbReference>
<dbReference type="ChiTaRS" id="Ccr4">
    <property type="organism name" value="mouse"/>
</dbReference>
<dbReference type="PRO" id="PR:P51680"/>
<dbReference type="Proteomes" id="UP000000589">
    <property type="component" value="Chromosome 9"/>
</dbReference>
<dbReference type="RNAct" id="P51680">
    <property type="molecule type" value="protein"/>
</dbReference>
<dbReference type="Bgee" id="ENSMUSG00000047898">
    <property type="expression patterns" value="Expressed in thymus and 50 other cell types or tissues"/>
</dbReference>
<dbReference type="ExpressionAtlas" id="P51680">
    <property type="expression patterns" value="baseline and differential"/>
</dbReference>
<dbReference type="GO" id="GO:0009897">
    <property type="term" value="C:external side of plasma membrane"/>
    <property type="evidence" value="ECO:0000314"/>
    <property type="project" value="MGI"/>
</dbReference>
<dbReference type="GO" id="GO:0016493">
    <property type="term" value="F:C-C chemokine receptor activity"/>
    <property type="evidence" value="ECO:0000315"/>
    <property type="project" value="MGI"/>
</dbReference>
<dbReference type="GO" id="GO:0006935">
    <property type="term" value="P:chemotaxis"/>
    <property type="evidence" value="ECO:0000315"/>
    <property type="project" value="MGI"/>
</dbReference>
<dbReference type="GO" id="GO:0048872">
    <property type="term" value="P:homeostasis of number of cells"/>
    <property type="evidence" value="ECO:0000315"/>
    <property type="project" value="MGI"/>
</dbReference>
<dbReference type="GO" id="GO:0006955">
    <property type="term" value="P:immune response"/>
    <property type="evidence" value="ECO:0007669"/>
    <property type="project" value="InterPro"/>
</dbReference>
<dbReference type="GO" id="GO:0006954">
    <property type="term" value="P:inflammatory response"/>
    <property type="evidence" value="ECO:0000315"/>
    <property type="project" value="MGI"/>
</dbReference>
<dbReference type="GO" id="GO:1904936">
    <property type="term" value="P:interneuron migration"/>
    <property type="evidence" value="ECO:0000315"/>
    <property type="project" value="MGI"/>
</dbReference>
<dbReference type="GO" id="GO:0001764">
    <property type="term" value="P:neuron migration"/>
    <property type="evidence" value="ECO:0000315"/>
    <property type="project" value="MGI"/>
</dbReference>
<dbReference type="GO" id="GO:0002507">
    <property type="term" value="P:tolerance induction"/>
    <property type="evidence" value="ECO:0000315"/>
    <property type="project" value="MGI"/>
</dbReference>
<dbReference type="CDD" id="cd14984">
    <property type="entry name" value="7tmA_Chemokine_R"/>
    <property type="match status" value="1"/>
</dbReference>
<dbReference type="FunFam" id="1.20.1070.10:FF:000026">
    <property type="entry name" value="C-C chemokine receptor type 5"/>
    <property type="match status" value="1"/>
</dbReference>
<dbReference type="Gene3D" id="1.20.1070.10">
    <property type="entry name" value="Rhodopsin 7-helix transmembrane proteins"/>
    <property type="match status" value="1"/>
</dbReference>
<dbReference type="InterPro" id="IPR050119">
    <property type="entry name" value="CCR1-9-like"/>
</dbReference>
<dbReference type="InterPro" id="IPR002239">
    <property type="entry name" value="Chemokine_CCR4"/>
</dbReference>
<dbReference type="InterPro" id="IPR000355">
    <property type="entry name" value="Chemokine_rcpt"/>
</dbReference>
<dbReference type="InterPro" id="IPR000276">
    <property type="entry name" value="GPCR_Rhodpsn"/>
</dbReference>
<dbReference type="InterPro" id="IPR017452">
    <property type="entry name" value="GPCR_Rhodpsn_7TM"/>
</dbReference>
<dbReference type="PANTHER" id="PTHR10489:SF608">
    <property type="entry name" value="C-C CHEMOKINE RECEPTOR TYPE 4"/>
    <property type="match status" value="1"/>
</dbReference>
<dbReference type="PANTHER" id="PTHR10489">
    <property type="entry name" value="CELL ADHESION MOLECULE"/>
    <property type="match status" value="1"/>
</dbReference>
<dbReference type="Pfam" id="PF00001">
    <property type="entry name" value="7tm_1"/>
    <property type="match status" value="1"/>
</dbReference>
<dbReference type="PRINTS" id="PR00657">
    <property type="entry name" value="CCCHEMOKINER"/>
</dbReference>
<dbReference type="PRINTS" id="PR01109">
    <property type="entry name" value="CHEMOKINER4"/>
</dbReference>
<dbReference type="PRINTS" id="PR00237">
    <property type="entry name" value="GPCRRHODOPSN"/>
</dbReference>
<dbReference type="SMART" id="SM01381">
    <property type="entry name" value="7TM_GPCR_Srsx"/>
    <property type="match status" value="1"/>
</dbReference>
<dbReference type="SUPFAM" id="SSF81321">
    <property type="entry name" value="Family A G protein-coupled receptor-like"/>
    <property type="match status" value="1"/>
</dbReference>
<dbReference type="PROSITE" id="PS00237">
    <property type="entry name" value="G_PROTEIN_RECEP_F1_1"/>
    <property type="match status" value="1"/>
</dbReference>
<dbReference type="PROSITE" id="PS50262">
    <property type="entry name" value="G_PROTEIN_RECEP_F1_2"/>
    <property type="match status" value="1"/>
</dbReference>